<reference key="1">
    <citation type="journal article" date="2009" name="BMC Genomics">
        <title>Analysis of the Rickettsia africae genome reveals that virulence acquisition in Rickettsia species may be explained by genome reduction.</title>
        <authorList>
            <person name="Fournier P.-E."/>
            <person name="El Karkouri K."/>
            <person name="Leroy Q."/>
            <person name="Robert C."/>
            <person name="Giumelli B."/>
            <person name="Renesto P."/>
            <person name="Socolovschi C."/>
            <person name="Parola P."/>
            <person name="Audic S."/>
            <person name="Raoult D."/>
        </authorList>
    </citation>
    <scope>NUCLEOTIDE SEQUENCE [LARGE SCALE GENOMIC DNA]</scope>
    <source>
        <strain>ESF-5</strain>
    </source>
</reference>
<protein>
    <recommendedName>
        <fullName evidence="1">Diaminopimelate epimerase</fullName>
        <shortName evidence="1">DAP epimerase</shortName>
        <ecNumber evidence="1">5.1.1.7</ecNumber>
    </recommendedName>
    <alternativeName>
        <fullName evidence="1">PLP-independent amino acid racemase</fullName>
    </alternativeName>
</protein>
<organism>
    <name type="scientific">Rickettsia africae (strain ESF-5)</name>
    <dbReference type="NCBI Taxonomy" id="347255"/>
    <lineage>
        <taxon>Bacteria</taxon>
        <taxon>Pseudomonadati</taxon>
        <taxon>Pseudomonadota</taxon>
        <taxon>Alphaproteobacteria</taxon>
        <taxon>Rickettsiales</taxon>
        <taxon>Rickettsiaceae</taxon>
        <taxon>Rickettsieae</taxon>
        <taxon>Rickettsia</taxon>
        <taxon>spotted fever group</taxon>
    </lineage>
</organism>
<comment type="function">
    <text evidence="1">Catalyzes the stereoinversion of LL-2,6-diaminopimelate (L,L-DAP) to meso-diaminopimelate (meso-DAP), a precursor of L-lysine and an essential component of the bacterial peptidoglycan.</text>
</comment>
<comment type="catalytic activity">
    <reaction evidence="1">
        <text>(2S,6S)-2,6-diaminopimelate = meso-2,6-diaminopimelate</text>
        <dbReference type="Rhea" id="RHEA:15393"/>
        <dbReference type="ChEBI" id="CHEBI:57609"/>
        <dbReference type="ChEBI" id="CHEBI:57791"/>
        <dbReference type="EC" id="5.1.1.7"/>
    </reaction>
</comment>
<comment type="pathway">
    <text evidence="1">Amino-acid biosynthesis; L-lysine biosynthesis via DAP pathway; DL-2,6-diaminopimelate from LL-2,6-diaminopimelate: step 1/1.</text>
</comment>
<comment type="subunit">
    <text evidence="1">Homodimer.</text>
</comment>
<comment type="subcellular location">
    <subcellularLocation>
        <location evidence="1">Cytoplasm</location>
    </subcellularLocation>
</comment>
<comment type="similarity">
    <text evidence="1">Belongs to the diaminopimelate epimerase family.</text>
</comment>
<gene>
    <name evidence="1" type="primary">dapF</name>
    <name type="ordered locus">RAF_ORF0540</name>
</gene>
<dbReference type="EC" id="5.1.1.7" evidence="1"/>
<dbReference type="EMBL" id="CP001612">
    <property type="protein sequence ID" value="ACP53451.1"/>
    <property type="molecule type" value="Genomic_DNA"/>
</dbReference>
<dbReference type="RefSeq" id="WP_012719673.1">
    <property type="nucleotide sequence ID" value="NC_012633.1"/>
</dbReference>
<dbReference type="SMR" id="C3PNE1"/>
<dbReference type="KEGG" id="raf:RAF_ORF0540"/>
<dbReference type="HOGENOM" id="CLU_053306_1_0_5"/>
<dbReference type="UniPathway" id="UPA00034">
    <property type="reaction ID" value="UER00025"/>
</dbReference>
<dbReference type="Proteomes" id="UP000002305">
    <property type="component" value="Chromosome"/>
</dbReference>
<dbReference type="GO" id="GO:0005829">
    <property type="term" value="C:cytosol"/>
    <property type="evidence" value="ECO:0007669"/>
    <property type="project" value="TreeGrafter"/>
</dbReference>
<dbReference type="GO" id="GO:0008837">
    <property type="term" value="F:diaminopimelate epimerase activity"/>
    <property type="evidence" value="ECO:0007669"/>
    <property type="project" value="UniProtKB-UniRule"/>
</dbReference>
<dbReference type="GO" id="GO:0009089">
    <property type="term" value="P:lysine biosynthetic process via diaminopimelate"/>
    <property type="evidence" value="ECO:0007669"/>
    <property type="project" value="UniProtKB-UniRule"/>
</dbReference>
<dbReference type="Gene3D" id="3.10.310.10">
    <property type="entry name" value="Diaminopimelate Epimerase, Chain A, domain 1"/>
    <property type="match status" value="2"/>
</dbReference>
<dbReference type="HAMAP" id="MF_00197">
    <property type="entry name" value="DAP_epimerase"/>
    <property type="match status" value="1"/>
</dbReference>
<dbReference type="InterPro" id="IPR018510">
    <property type="entry name" value="DAP_epimerase_AS"/>
</dbReference>
<dbReference type="InterPro" id="IPR001653">
    <property type="entry name" value="DAP_epimerase_DapF"/>
</dbReference>
<dbReference type="NCBIfam" id="TIGR00652">
    <property type="entry name" value="DapF"/>
    <property type="match status" value="1"/>
</dbReference>
<dbReference type="PANTHER" id="PTHR31689:SF0">
    <property type="entry name" value="DIAMINOPIMELATE EPIMERASE"/>
    <property type="match status" value="1"/>
</dbReference>
<dbReference type="PANTHER" id="PTHR31689">
    <property type="entry name" value="DIAMINOPIMELATE EPIMERASE, CHLOROPLASTIC"/>
    <property type="match status" value="1"/>
</dbReference>
<dbReference type="Pfam" id="PF01678">
    <property type="entry name" value="DAP_epimerase"/>
    <property type="match status" value="2"/>
</dbReference>
<dbReference type="SUPFAM" id="SSF54506">
    <property type="entry name" value="Diaminopimelate epimerase-like"/>
    <property type="match status" value="2"/>
</dbReference>
<dbReference type="PROSITE" id="PS01326">
    <property type="entry name" value="DAP_EPIMERASE"/>
    <property type="match status" value="1"/>
</dbReference>
<keyword id="KW-0028">Amino-acid biosynthesis</keyword>
<keyword id="KW-0963">Cytoplasm</keyword>
<keyword id="KW-0413">Isomerase</keyword>
<keyword id="KW-0457">Lysine biosynthesis</keyword>
<feature type="chain" id="PRO_1000204066" description="Diaminopimelate epimerase">
    <location>
        <begin position="1"/>
        <end position="270"/>
    </location>
</feature>
<feature type="active site" description="Proton donor" evidence="1">
    <location>
        <position position="75"/>
    </location>
</feature>
<feature type="active site" description="Proton acceptor" evidence="1">
    <location>
        <position position="213"/>
    </location>
</feature>
<feature type="binding site" evidence="1">
    <location>
        <position position="15"/>
    </location>
    <ligand>
        <name>substrate</name>
    </ligand>
</feature>
<feature type="binding site" evidence="1">
    <location>
        <position position="49"/>
    </location>
    <ligand>
        <name>substrate</name>
    </ligand>
</feature>
<feature type="binding site" evidence="1">
    <location>
        <position position="66"/>
    </location>
    <ligand>
        <name>substrate</name>
    </ligand>
</feature>
<feature type="binding site" evidence="1">
    <location>
        <begin position="76"/>
        <end position="77"/>
    </location>
    <ligand>
        <name>substrate</name>
    </ligand>
</feature>
<feature type="binding site" evidence="1">
    <location>
        <position position="155"/>
    </location>
    <ligand>
        <name>substrate</name>
    </ligand>
</feature>
<feature type="binding site" evidence="1">
    <location>
        <position position="187"/>
    </location>
    <ligand>
        <name>substrate</name>
    </ligand>
</feature>
<feature type="binding site" evidence="1">
    <location>
        <begin position="204"/>
        <end position="205"/>
    </location>
    <ligand>
        <name>substrate</name>
    </ligand>
</feature>
<feature type="binding site" evidence="1">
    <location>
        <begin position="214"/>
        <end position="215"/>
    </location>
    <ligand>
        <name>substrate</name>
    </ligand>
</feature>
<feature type="site" description="Could be important to modulate the pK values of the two catalytic cysteine residues" evidence="1">
    <location>
        <position position="157"/>
    </location>
</feature>
<feature type="site" description="Could be important to modulate the pK values of the two catalytic cysteine residues" evidence="1">
    <location>
        <position position="204"/>
    </location>
</feature>
<sequence length="270" mass="30085">MISKINFVKMHGLGNDFVIVNKRDLSSSYDLSQLAKNMAERHTGIGCDQFIIYEEHNDFYEMIIYNIDGSSAKLCGNATRCLAKLIYLDTGKQDITVMVGNKKLLCNVNDENNISVNVGSVSFNEAWMPNRDKVWEFAERYMIDLKETICVDIGNPHVVIFSKLEPQDQKIVGERLQAKELFADGVNVNFAEVKDNKIYLSVWERGAGLTLACGSGACGSFAAGLKRGFIHSPSTIVFKHGNLTMKEENGNIIMQGAATLVARGEYYCEQ</sequence>
<evidence type="ECO:0000255" key="1">
    <source>
        <dbReference type="HAMAP-Rule" id="MF_00197"/>
    </source>
</evidence>
<proteinExistence type="inferred from homology"/>
<accession>C3PNE1</accession>
<name>DAPF_RICAE</name>